<protein>
    <recommendedName>
        <fullName evidence="1">Ion-translocating oxidoreductase complex subunit B</fullName>
        <ecNumber evidence="1">7.-.-.-</ecNumber>
    </recommendedName>
    <alternativeName>
        <fullName evidence="1">Rnf electron transport complex subunit B</fullName>
    </alternativeName>
</protein>
<comment type="function">
    <text evidence="1">Part of a membrane-bound complex that couples electron transfer with translocation of ions across the membrane.</text>
</comment>
<comment type="cofactor">
    <cofactor evidence="1">
        <name>[4Fe-4S] cluster</name>
        <dbReference type="ChEBI" id="CHEBI:49883"/>
    </cofactor>
    <text evidence="1">Binds 3 [4Fe-4S] clusters.</text>
</comment>
<comment type="subunit">
    <text evidence="1">The complex is composed of six subunits: RnfA, RnfB, RnfC, RnfD, RnfE and RnfG.</text>
</comment>
<comment type="subcellular location">
    <subcellularLocation>
        <location evidence="1">Cell inner membrane</location>
    </subcellularLocation>
</comment>
<comment type="similarity">
    <text evidence="1">Belongs to the 4Fe4S bacterial-type ferredoxin family. RnfB subfamily.</text>
</comment>
<evidence type="ECO:0000255" key="1">
    <source>
        <dbReference type="HAMAP-Rule" id="MF_00463"/>
    </source>
</evidence>
<gene>
    <name evidence="1" type="primary">rnfB</name>
    <name type="synonym">rsxB</name>
    <name type="ordered locus">YPN_1713</name>
    <name type="ORF">YP516_1904</name>
</gene>
<proteinExistence type="inferred from homology"/>
<sequence>MMSLWIAIGALSTLALVSGVVLGFAARRFQVDEDPVVEQVDAILPQSQCGQCGYPGCRPYAEAVSTGGEKINKCAPGGEQVMLKLAELLAVEPQPLDGDESAAHPQRKVAFIDEANCIGCTKCIQACPVDAIIGATRAMHTVLSDLCTGCDLCVAPCPTDCIEMIPVATTTANWKWDLNTIPVKNLPN</sequence>
<dbReference type="EC" id="7.-.-.-" evidence="1"/>
<dbReference type="EMBL" id="CP000305">
    <property type="protein sequence ID" value="ABG18042.1"/>
    <property type="molecule type" value="Genomic_DNA"/>
</dbReference>
<dbReference type="EMBL" id="ACNQ01000009">
    <property type="protein sequence ID" value="EEO77169.1"/>
    <property type="molecule type" value="Genomic_DNA"/>
</dbReference>
<dbReference type="RefSeq" id="WP_002210596.1">
    <property type="nucleotide sequence ID" value="NZ_ACNQ01000009.1"/>
</dbReference>
<dbReference type="GeneID" id="57976424"/>
<dbReference type="KEGG" id="ypn:YPN_1713"/>
<dbReference type="HOGENOM" id="CLU_063448_2_0_6"/>
<dbReference type="Proteomes" id="UP000008936">
    <property type="component" value="Chromosome"/>
</dbReference>
<dbReference type="GO" id="GO:0005886">
    <property type="term" value="C:plasma membrane"/>
    <property type="evidence" value="ECO:0007669"/>
    <property type="project" value="UniProtKB-SubCell"/>
</dbReference>
<dbReference type="GO" id="GO:0051539">
    <property type="term" value="F:4 iron, 4 sulfur cluster binding"/>
    <property type="evidence" value="ECO:0007669"/>
    <property type="project" value="UniProtKB-UniRule"/>
</dbReference>
<dbReference type="GO" id="GO:0009055">
    <property type="term" value="F:electron transfer activity"/>
    <property type="evidence" value="ECO:0007669"/>
    <property type="project" value="InterPro"/>
</dbReference>
<dbReference type="GO" id="GO:0046872">
    <property type="term" value="F:metal ion binding"/>
    <property type="evidence" value="ECO:0007669"/>
    <property type="project" value="UniProtKB-KW"/>
</dbReference>
<dbReference type="GO" id="GO:0022900">
    <property type="term" value="P:electron transport chain"/>
    <property type="evidence" value="ECO:0007669"/>
    <property type="project" value="UniProtKB-UniRule"/>
</dbReference>
<dbReference type="FunFam" id="1.10.15.40:FF:000001">
    <property type="entry name" value="Ion-translocating oxidoreductase complex subunit B"/>
    <property type="match status" value="1"/>
</dbReference>
<dbReference type="Gene3D" id="3.30.70.20">
    <property type="match status" value="1"/>
</dbReference>
<dbReference type="Gene3D" id="1.10.15.40">
    <property type="entry name" value="Electron transport complex subunit B, putative Fe-S cluster"/>
    <property type="match status" value="1"/>
</dbReference>
<dbReference type="HAMAP" id="MF_00463">
    <property type="entry name" value="RsxB_RnfB"/>
    <property type="match status" value="1"/>
</dbReference>
<dbReference type="InterPro" id="IPR007202">
    <property type="entry name" value="4Fe-4S_dom"/>
</dbReference>
<dbReference type="InterPro" id="IPR017896">
    <property type="entry name" value="4Fe4S_Fe-S-bd"/>
</dbReference>
<dbReference type="InterPro" id="IPR017900">
    <property type="entry name" value="4Fe4S_Fe_S_CS"/>
</dbReference>
<dbReference type="InterPro" id="IPR010207">
    <property type="entry name" value="Elect_transpt_cplx_RnfB/RsxB"/>
</dbReference>
<dbReference type="InterPro" id="IPR016463">
    <property type="entry name" value="RnfB/RsxB_Proteobac"/>
</dbReference>
<dbReference type="InterPro" id="IPR050294">
    <property type="entry name" value="RnfB_subfamily"/>
</dbReference>
<dbReference type="NCBIfam" id="NF003475">
    <property type="entry name" value="PRK05113.1"/>
    <property type="match status" value="1"/>
</dbReference>
<dbReference type="NCBIfam" id="TIGR01944">
    <property type="entry name" value="rnfB"/>
    <property type="match status" value="1"/>
</dbReference>
<dbReference type="PANTHER" id="PTHR42859:SF3">
    <property type="entry name" value="ION-TRANSLOCATING OXIDOREDUCTASE COMPLEX SUBUNIT B"/>
    <property type="match status" value="1"/>
</dbReference>
<dbReference type="PANTHER" id="PTHR42859">
    <property type="entry name" value="OXIDOREDUCTASE"/>
    <property type="match status" value="1"/>
</dbReference>
<dbReference type="Pfam" id="PF14697">
    <property type="entry name" value="Fer4_21"/>
    <property type="match status" value="1"/>
</dbReference>
<dbReference type="Pfam" id="PF04060">
    <property type="entry name" value="FeS"/>
    <property type="match status" value="1"/>
</dbReference>
<dbReference type="PIRSF" id="PIRSF005784">
    <property type="entry name" value="Elect_transpt_RnfB"/>
    <property type="match status" value="1"/>
</dbReference>
<dbReference type="SUPFAM" id="SSF54862">
    <property type="entry name" value="4Fe-4S ferredoxins"/>
    <property type="match status" value="1"/>
</dbReference>
<dbReference type="PROSITE" id="PS51656">
    <property type="entry name" value="4FE4S"/>
    <property type="match status" value="1"/>
</dbReference>
<dbReference type="PROSITE" id="PS00198">
    <property type="entry name" value="4FE4S_FER_1"/>
    <property type="match status" value="2"/>
</dbReference>
<dbReference type="PROSITE" id="PS51379">
    <property type="entry name" value="4FE4S_FER_2"/>
    <property type="match status" value="2"/>
</dbReference>
<keyword id="KW-0004">4Fe-4S</keyword>
<keyword id="KW-0997">Cell inner membrane</keyword>
<keyword id="KW-1003">Cell membrane</keyword>
<keyword id="KW-0249">Electron transport</keyword>
<keyword id="KW-0408">Iron</keyword>
<keyword id="KW-0411">Iron-sulfur</keyword>
<keyword id="KW-0472">Membrane</keyword>
<keyword id="KW-0479">Metal-binding</keyword>
<keyword id="KW-0677">Repeat</keyword>
<keyword id="KW-1278">Translocase</keyword>
<keyword id="KW-0813">Transport</keyword>
<accession>Q1CIY8</accession>
<accession>C4GT09</accession>
<reference key="1">
    <citation type="journal article" date="2006" name="J. Bacteriol.">
        <title>Complete genome sequence of Yersinia pestis strains Antiqua and Nepal516: evidence of gene reduction in an emerging pathogen.</title>
        <authorList>
            <person name="Chain P.S.G."/>
            <person name="Hu P."/>
            <person name="Malfatti S.A."/>
            <person name="Radnedge L."/>
            <person name="Larimer F."/>
            <person name="Vergez L.M."/>
            <person name="Worsham P."/>
            <person name="Chu M.C."/>
            <person name="Andersen G.L."/>
        </authorList>
    </citation>
    <scope>NUCLEOTIDE SEQUENCE [LARGE SCALE GENOMIC DNA]</scope>
    <source>
        <strain>Nepal516</strain>
    </source>
</reference>
<reference key="2">
    <citation type="submission" date="2009-04" db="EMBL/GenBank/DDBJ databases">
        <title>Yersinia pestis Nepal516A whole genome shotgun sequencing project.</title>
        <authorList>
            <person name="Plunkett G. III"/>
            <person name="Anderson B.D."/>
            <person name="Baumler D.J."/>
            <person name="Burland V."/>
            <person name="Cabot E.L."/>
            <person name="Glasner J.D."/>
            <person name="Mau B."/>
            <person name="Neeno-Eckwall E."/>
            <person name="Perna N.T."/>
            <person name="Munk A.C."/>
            <person name="Tapia R."/>
            <person name="Green L.D."/>
            <person name="Rogers Y.C."/>
            <person name="Detter J.C."/>
            <person name="Bruce D.C."/>
            <person name="Brettin T.S."/>
        </authorList>
    </citation>
    <scope>NUCLEOTIDE SEQUENCE [LARGE SCALE GENOMIC DNA]</scope>
    <source>
        <strain>Nepal516</strain>
    </source>
</reference>
<name>RNFB_YERPN</name>
<feature type="chain" id="PRO_1000013667" description="Ion-translocating oxidoreductase complex subunit B">
    <location>
        <begin position="1"/>
        <end position="188"/>
    </location>
</feature>
<feature type="domain" description="4Fe-4S" evidence="1">
    <location>
        <begin position="32"/>
        <end position="91"/>
    </location>
</feature>
<feature type="domain" description="4Fe-4S ferredoxin-type 1" evidence="1">
    <location>
        <begin position="108"/>
        <end position="137"/>
    </location>
</feature>
<feature type="domain" description="4Fe-4S ferredoxin-type 2" evidence="1">
    <location>
        <begin position="138"/>
        <end position="167"/>
    </location>
</feature>
<feature type="region of interest" description="Hydrophobic" evidence="1">
    <location>
        <begin position="1"/>
        <end position="26"/>
    </location>
</feature>
<feature type="binding site" evidence="1">
    <location>
        <position position="49"/>
    </location>
    <ligand>
        <name>[4Fe-4S] cluster</name>
        <dbReference type="ChEBI" id="CHEBI:49883"/>
        <label>1</label>
    </ligand>
</feature>
<feature type="binding site" evidence="1">
    <location>
        <position position="52"/>
    </location>
    <ligand>
        <name>[4Fe-4S] cluster</name>
        <dbReference type="ChEBI" id="CHEBI:49883"/>
        <label>1</label>
    </ligand>
</feature>
<feature type="binding site" evidence="1">
    <location>
        <position position="57"/>
    </location>
    <ligand>
        <name>[4Fe-4S] cluster</name>
        <dbReference type="ChEBI" id="CHEBI:49883"/>
        <label>1</label>
    </ligand>
</feature>
<feature type="binding site" evidence="1">
    <location>
        <position position="74"/>
    </location>
    <ligand>
        <name>[4Fe-4S] cluster</name>
        <dbReference type="ChEBI" id="CHEBI:49883"/>
        <label>1</label>
    </ligand>
</feature>
<feature type="binding site" evidence="1">
    <location>
        <position position="117"/>
    </location>
    <ligand>
        <name>[4Fe-4S] cluster</name>
        <dbReference type="ChEBI" id="CHEBI:49883"/>
        <label>2</label>
    </ligand>
</feature>
<feature type="binding site" evidence="1">
    <location>
        <position position="120"/>
    </location>
    <ligand>
        <name>[4Fe-4S] cluster</name>
        <dbReference type="ChEBI" id="CHEBI:49883"/>
        <label>2</label>
    </ligand>
</feature>
<feature type="binding site" evidence="1">
    <location>
        <position position="123"/>
    </location>
    <ligand>
        <name>[4Fe-4S] cluster</name>
        <dbReference type="ChEBI" id="CHEBI:49883"/>
        <label>2</label>
    </ligand>
</feature>
<feature type="binding site" evidence="1">
    <location>
        <position position="127"/>
    </location>
    <ligand>
        <name>[4Fe-4S] cluster</name>
        <dbReference type="ChEBI" id="CHEBI:49883"/>
        <label>3</label>
    </ligand>
</feature>
<feature type="binding site" evidence="1">
    <location>
        <position position="147"/>
    </location>
    <ligand>
        <name>[4Fe-4S] cluster</name>
        <dbReference type="ChEBI" id="CHEBI:49883"/>
        <label>3</label>
    </ligand>
</feature>
<feature type="binding site" evidence="1">
    <location>
        <position position="150"/>
    </location>
    <ligand>
        <name>[4Fe-4S] cluster</name>
        <dbReference type="ChEBI" id="CHEBI:49883"/>
        <label>3</label>
    </ligand>
</feature>
<feature type="binding site" evidence="1">
    <location>
        <position position="153"/>
    </location>
    <ligand>
        <name>[4Fe-4S] cluster</name>
        <dbReference type="ChEBI" id="CHEBI:49883"/>
        <label>3</label>
    </ligand>
</feature>
<feature type="binding site" evidence="1">
    <location>
        <position position="157"/>
    </location>
    <ligand>
        <name>[4Fe-4S] cluster</name>
        <dbReference type="ChEBI" id="CHEBI:49883"/>
        <label>2</label>
    </ligand>
</feature>
<organism>
    <name type="scientific">Yersinia pestis bv. Antiqua (strain Nepal516)</name>
    <dbReference type="NCBI Taxonomy" id="377628"/>
    <lineage>
        <taxon>Bacteria</taxon>
        <taxon>Pseudomonadati</taxon>
        <taxon>Pseudomonadota</taxon>
        <taxon>Gammaproteobacteria</taxon>
        <taxon>Enterobacterales</taxon>
        <taxon>Yersiniaceae</taxon>
        <taxon>Yersinia</taxon>
    </lineage>
</organism>